<gene>
    <name evidence="13" type="primary">St6galnac1</name>
    <name type="synonym">Siat7a</name>
</gene>
<dbReference type="EC" id="2.4.3.3" evidence="6"/>
<dbReference type="EMBL" id="Y11274">
    <property type="protein sequence ID" value="CAA72137.1"/>
    <property type="molecule type" value="mRNA"/>
</dbReference>
<dbReference type="EMBL" id="Y10294">
    <property type="protein sequence ID" value="CAA71341.1"/>
    <property type="molecule type" value="Genomic_DNA"/>
</dbReference>
<dbReference type="EMBL" id="AL645542">
    <property type="status" value="NOT_ANNOTATED_CDS"/>
    <property type="molecule type" value="Genomic_DNA"/>
</dbReference>
<dbReference type="EMBL" id="BC141095">
    <property type="protein sequence ID" value="AAI41096.1"/>
    <property type="molecule type" value="mRNA"/>
</dbReference>
<dbReference type="EMBL" id="BC145373">
    <property type="protein sequence ID" value="AAI45374.1"/>
    <property type="molecule type" value="mRNA"/>
</dbReference>
<dbReference type="CCDS" id="CCDS36380.1"/>
<dbReference type="PIR" id="JC7248">
    <property type="entry name" value="JC7248"/>
</dbReference>
<dbReference type="RefSeq" id="NP_035501.2">
    <property type="nucleotide sequence ID" value="NM_011371.2"/>
</dbReference>
<dbReference type="SMR" id="Q9QZ39"/>
<dbReference type="FunCoup" id="Q9QZ39">
    <property type="interactions" value="84"/>
</dbReference>
<dbReference type="STRING" id="10090.ENSMUSP00000009732"/>
<dbReference type="CAZy" id="GT29">
    <property type="family name" value="Glycosyltransferase Family 29"/>
</dbReference>
<dbReference type="GlyCosmos" id="Q9QZ39">
    <property type="glycosylation" value="5 sites, No reported glycans"/>
</dbReference>
<dbReference type="GlyGen" id="Q9QZ39">
    <property type="glycosylation" value="6 sites, 1 O-linked glycan (1 site)"/>
</dbReference>
<dbReference type="iPTMnet" id="Q9QZ39"/>
<dbReference type="PhosphoSitePlus" id="Q9QZ39"/>
<dbReference type="PaxDb" id="10090-ENSMUSP00000009732"/>
<dbReference type="ProteomicsDB" id="261358"/>
<dbReference type="Antibodypedia" id="2230">
    <property type="antibodies" value="140 antibodies from 22 providers"/>
</dbReference>
<dbReference type="DNASU" id="20445"/>
<dbReference type="Ensembl" id="ENSMUST00000009732.8">
    <property type="protein sequence ID" value="ENSMUSP00000009732.8"/>
    <property type="gene ID" value="ENSMUSG00000009588.10"/>
</dbReference>
<dbReference type="GeneID" id="20445"/>
<dbReference type="KEGG" id="mmu:20445"/>
<dbReference type="UCSC" id="uc007mme.1">
    <property type="organism name" value="mouse"/>
</dbReference>
<dbReference type="AGR" id="MGI:1341826"/>
<dbReference type="CTD" id="55808"/>
<dbReference type="MGI" id="MGI:1341826">
    <property type="gene designation" value="St6galnac1"/>
</dbReference>
<dbReference type="VEuPathDB" id="HostDB:ENSMUSG00000009588"/>
<dbReference type="eggNOG" id="KOG2692">
    <property type="taxonomic scope" value="Eukaryota"/>
</dbReference>
<dbReference type="GeneTree" id="ENSGT00940000159930"/>
<dbReference type="HOGENOM" id="CLU_032020_4_1_1"/>
<dbReference type="InParanoid" id="Q9QZ39"/>
<dbReference type="OMA" id="WDFEEQY"/>
<dbReference type="OrthoDB" id="10264956at2759"/>
<dbReference type="PhylomeDB" id="Q9QZ39"/>
<dbReference type="TreeFam" id="TF354325"/>
<dbReference type="Reactome" id="R-MMU-4085001">
    <property type="pathway name" value="Sialic acid metabolism"/>
</dbReference>
<dbReference type="UniPathway" id="UPA00378"/>
<dbReference type="BioGRID-ORCS" id="20445">
    <property type="hits" value="7 hits in 77 CRISPR screens"/>
</dbReference>
<dbReference type="ChiTaRS" id="St6galnac1">
    <property type="organism name" value="mouse"/>
</dbReference>
<dbReference type="PRO" id="PR:Q9QZ39"/>
<dbReference type="Proteomes" id="UP000000589">
    <property type="component" value="Chromosome 11"/>
</dbReference>
<dbReference type="RNAct" id="Q9QZ39">
    <property type="molecule type" value="protein"/>
</dbReference>
<dbReference type="Bgee" id="ENSMUSG00000009588">
    <property type="expression patterns" value="Expressed in conjunctival fornix and 28 other cell types or tissues"/>
</dbReference>
<dbReference type="GO" id="GO:0000139">
    <property type="term" value="C:Golgi membrane"/>
    <property type="evidence" value="ECO:0000250"/>
    <property type="project" value="UniProtKB"/>
</dbReference>
<dbReference type="GO" id="GO:0001665">
    <property type="term" value="F:alpha-N-acetylgalactosaminide alpha-2,6-sialyltransferase activity"/>
    <property type="evidence" value="ECO:0000314"/>
    <property type="project" value="MGI"/>
</dbReference>
<dbReference type="GO" id="GO:0001574">
    <property type="term" value="P:ganglioside biosynthetic process"/>
    <property type="evidence" value="ECO:0000304"/>
    <property type="project" value="MGI"/>
</dbReference>
<dbReference type="GO" id="GO:0051851">
    <property type="term" value="P:host-mediated perturbation of symbiont process"/>
    <property type="evidence" value="ECO:0000315"/>
    <property type="project" value="UniProtKB"/>
</dbReference>
<dbReference type="GO" id="GO:0048874">
    <property type="term" value="P:host-mediated regulation of intestinal microbiota composition"/>
    <property type="evidence" value="ECO:0000315"/>
    <property type="project" value="UniProtKB"/>
</dbReference>
<dbReference type="GO" id="GO:0009312">
    <property type="term" value="P:oligosaccharide biosynthetic process"/>
    <property type="evidence" value="ECO:0000314"/>
    <property type="project" value="MGI"/>
</dbReference>
<dbReference type="GO" id="GO:0006486">
    <property type="term" value="P:protein glycosylation"/>
    <property type="evidence" value="ECO:0000250"/>
    <property type="project" value="UniProtKB"/>
</dbReference>
<dbReference type="FunFam" id="3.90.1480.20:FF:000013">
    <property type="entry name" value="ST6 N-acetylgalactosaminide alpha-2,6-sialyltransferase 1"/>
    <property type="match status" value="1"/>
</dbReference>
<dbReference type="Gene3D" id="3.90.1480.20">
    <property type="entry name" value="Glycosyl transferase family 29"/>
    <property type="match status" value="1"/>
</dbReference>
<dbReference type="InterPro" id="IPR001675">
    <property type="entry name" value="Glyco_trans_29"/>
</dbReference>
<dbReference type="InterPro" id="IPR038578">
    <property type="entry name" value="GT29-like_sf"/>
</dbReference>
<dbReference type="PANTHER" id="PTHR45941:SF1">
    <property type="entry name" value="ALPHA-N-ACETYLGALACTOSAMINIDE ALPHA-2,6-SIALYLTRANSFERASE 1"/>
    <property type="match status" value="1"/>
</dbReference>
<dbReference type="PANTHER" id="PTHR45941">
    <property type="entry name" value="ALPHA-N-ACETYLGALACTOSAMINIDE ALPHA-2,6-SIALYLTRANSFERASE 2-LIKE-RELATED"/>
    <property type="match status" value="1"/>
</dbReference>
<dbReference type="Pfam" id="PF00777">
    <property type="entry name" value="Glyco_transf_29"/>
    <property type="match status" value="1"/>
</dbReference>
<keyword id="KW-1015">Disulfide bond</keyword>
<keyword id="KW-0325">Glycoprotein</keyword>
<keyword id="KW-0328">Glycosyltransferase</keyword>
<keyword id="KW-0333">Golgi apparatus</keyword>
<keyword id="KW-0472">Membrane</keyword>
<keyword id="KW-1185">Reference proteome</keyword>
<keyword id="KW-0735">Signal-anchor</keyword>
<keyword id="KW-0808">Transferase</keyword>
<keyword id="KW-0812">Transmembrane</keyword>
<keyword id="KW-1133">Transmembrane helix</keyword>
<evidence type="ECO:0000250" key="1">
    <source>
        <dbReference type="UniProtKB" id="Q92183"/>
    </source>
</evidence>
<evidence type="ECO:0000250" key="2">
    <source>
        <dbReference type="UniProtKB" id="Q9NSC7"/>
    </source>
</evidence>
<evidence type="ECO:0000250" key="3">
    <source>
        <dbReference type="UniProtKB" id="Q9UJ37"/>
    </source>
</evidence>
<evidence type="ECO:0000255" key="4"/>
<evidence type="ECO:0000256" key="5">
    <source>
        <dbReference type="SAM" id="MobiDB-lite"/>
    </source>
</evidence>
<evidence type="ECO:0000269" key="6">
    <source>
    </source>
</evidence>
<evidence type="ECO:0000269" key="7">
    <source>
    </source>
</evidence>
<evidence type="ECO:0000269" key="8">
    <source>
    </source>
</evidence>
<evidence type="ECO:0000303" key="9">
    <source>
    </source>
</evidence>
<evidence type="ECO:0000305" key="10"/>
<evidence type="ECO:0000305" key="11">
    <source>
    </source>
</evidence>
<evidence type="ECO:0000305" key="12">
    <source>
    </source>
</evidence>
<evidence type="ECO:0000312" key="13">
    <source>
        <dbReference type="MGI" id="MGI:1341826"/>
    </source>
</evidence>
<accession>Q9QZ39</accession>
<accession>A2AA23</accession>
<accession>Q9JJP5</accession>
<protein>
    <recommendedName>
        <fullName>Alpha-N-acetylgalactosaminide alpha-2,6-sialyltransferase 1</fullName>
        <ecNumber evidence="6">2.4.3.3</ecNumber>
    </recommendedName>
    <alternativeName>
        <fullName evidence="9">GalNAc alpha-2,6-sialyltransferase I</fullName>
    </alternativeName>
    <alternativeName>
        <fullName evidence="9">ST6GalNAc I</fullName>
        <shortName evidence="9">ST6GalNAcI</shortName>
    </alternativeName>
    <alternativeName>
        <fullName>Sialyltransferase 7A</fullName>
        <shortName>SIAT7-A</shortName>
    </alternativeName>
</protein>
<name>SIA7A_MOUSE</name>
<feature type="chain" id="PRO_0000149270" description="Alpha-N-acetylgalactosaminide alpha-2,6-sialyltransferase 1">
    <location>
        <begin position="1"/>
        <end position="526"/>
    </location>
</feature>
<feature type="topological domain" description="Cytoplasmic" evidence="4">
    <location>
        <begin position="1"/>
        <end position="12"/>
    </location>
</feature>
<feature type="transmembrane region" description="Helical; Signal-anchor for type II membrane protein" evidence="4">
    <location>
        <begin position="13"/>
        <end position="33"/>
    </location>
</feature>
<feature type="topological domain" description="Lumenal" evidence="4">
    <location>
        <begin position="34"/>
        <end position="526"/>
    </location>
</feature>
<feature type="region of interest" description="Disordered" evidence="5">
    <location>
        <begin position="49"/>
        <end position="182"/>
    </location>
</feature>
<feature type="compositionally biased region" description="Basic and acidic residues" evidence="5">
    <location>
        <begin position="81"/>
        <end position="106"/>
    </location>
</feature>
<feature type="compositionally biased region" description="Polar residues" evidence="5">
    <location>
        <begin position="161"/>
        <end position="171"/>
    </location>
</feature>
<feature type="glycosylation site" description="N-linked (GlcNAc...) asparagine" evidence="4">
    <location>
        <position position="206"/>
    </location>
</feature>
<feature type="glycosylation site" description="N-linked (GlcNAc...) asparagine" evidence="4">
    <location>
        <position position="228"/>
    </location>
</feature>
<feature type="glycosylation site" description="N-linked (GlcNAc...) asparagine" evidence="4">
    <location>
        <position position="259"/>
    </location>
</feature>
<feature type="glycosylation site" description="N-linked (GlcNAc...) asparagine" evidence="4">
    <location>
        <position position="303"/>
    </location>
</feature>
<feature type="glycosylation site" description="N-linked (GlcNAc...) asparagine" evidence="4">
    <location>
        <position position="388"/>
    </location>
</feature>
<feature type="disulfide bond" evidence="3">
    <location>
        <begin position="207"/>
        <end position="290"/>
    </location>
</feature>
<feature type="disulfide bond" evidence="3">
    <location>
        <begin position="293"/>
        <end position="461"/>
    </location>
</feature>
<feature type="mutagenesis site" description="Knockin mice display compromised mucus barriers, dysbiosis with reduced bacterial diversity, as well as susceptibility to intestinal inflammation." evidence="8">
    <original>R</original>
    <variation>Q</variation>
    <location>
        <position position="319"/>
    </location>
</feature>
<feature type="sequence conflict" description="In Ref. 1; CAA72137." evidence="10" ref="1">
    <original>C</original>
    <variation>R</variation>
    <location>
        <position position="40"/>
    </location>
</feature>
<feature type="sequence conflict" description="In Ref. 1; CAA72137." evidence="10" ref="1">
    <original>WK</original>
    <variation>LN</variation>
    <location>
        <begin position="44"/>
        <end position="45"/>
    </location>
</feature>
<feature type="sequence conflict" description="In Ref. 1; CAA72137." evidence="10" ref="1">
    <original>A</original>
    <variation>S</variation>
    <location>
        <position position="48"/>
    </location>
</feature>
<feature type="sequence conflict" description="In Ref. 1; CAA72137." evidence="10" ref="1">
    <original>NQ</original>
    <variation>IL</variation>
    <location>
        <begin position="53"/>
        <end position="54"/>
    </location>
</feature>
<feature type="sequence conflict" description="In Ref. 1; CAA72137." evidence="10" ref="1">
    <original>V</original>
    <variation>G</variation>
    <location>
        <position position="61"/>
    </location>
</feature>
<feature type="sequence conflict" description="In Ref. 1; CAA72137." evidence="10" ref="1">
    <original>T</original>
    <variation>A</variation>
    <location>
        <position position="75"/>
    </location>
</feature>
<feature type="sequence conflict" description="In Ref. 1; CAA72137." evidence="10" ref="1">
    <original>L</original>
    <variation>V</variation>
    <location>
        <position position="133"/>
    </location>
</feature>
<feature type="sequence conflict" description="In Ref. 1; CAA72137." evidence="10" ref="1">
    <original>A</original>
    <variation>T</variation>
    <location>
        <position position="136"/>
    </location>
</feature>
<feature type="sequence conflict" description="In Ref. 1; CAA72137." evidence="10" ref="1">
    <original>D</original>
    <variation>N</variation>
    <location>
        <position position="378"/>
    </location>
</feature>
<feature type="sequence conflict" description="In Ref. 1; CAA72137." evidence="10" ref="1">
    <original>Q</original>
    <variation>E</variation>
    <location>
        <position position="475"/>
    </location>
</feature>
<comment type="function">
    <text evidence="6 8">Protein sialyltransferase specifically expressed in goblet cells that plays a key role in intestinal host-commensal homeostasis (PubMed:35303419). Conjugates sialic acid with an alpha-2-6 linkage to N-acetylgalactosamine (GalNAc) glycan chains linked to serine or threonine in glycoproteins (PubMed:10788794). Catalyzes the formation of the sialyl-Tn (S-Tn) antigen, an antigen found in intestinal goblet cells (PubMed:35303419, PubMed:16207894). Protein sialylation in globlet cells is essential for mucus integrity and is required to protect the intestinal mucus against excessive bacterial proteolytic degradation (PubMed:35303419).</text>
</comment>
<comment type="catalytic activity">
    <reaction evidence="6">
        <text>a beta-D-galactosyl-(1-&gt;3)-N-acetyl-alpha-D-galactosaminyl derivative + CMP-N-acetyl-beta-neuraminate = a beta-D-galactosyl-(1-&gt;3)-[N-acetyl-alpha-neuraminyl-(2-&gt;6)]-N-acetyl-alpha-D-galactosaminyl derivative + CMP + H(+)</text>
        <dbReference type="Rhea" id="RHEA:11136"/>
        <dbReference type="ChEBI" id="CHEBI:15378"/>
        <dbReference type="ChEBI" id="CHEBI:57812"/>
        <dbReference type="ChEBI" id="CHEBI:60377"/>
        <dbReference type="ChEBI" id="CHEBI:133470"/>
        <dbReference type="ChEBI" id="CHEBI:140764"/>
        <dbReference type="EC" id="2.4.3.3"/>
    </reaction>
    <physiologicalReaction direction="left-to-right" evidence="6">
        <dbReference type="Rhea" id="RHEA:11137"/>
    </physiologicalReaction>
</comment>
<comment type="catalytic activity">
    <reaction evidence="7">
        <text>a 3-O-[N-acetyl-alpha-D-galactosaminyl]-L-seryl-[protein] + CMP-N-acetyl-beta-neuraminate = a 3-O-[N-acetyl-alpha-neuraminosyl-(2-&gt;6)-N-acetyl-alpha-D-galactosaminyl]-L-seryl-[protein] + CMP + H(+)</text>
        <dbReference type="Rhea" id="RHEA:81647"/>
        <dbReference type="Rhea" id="RHEA-COMP:12788"/>
        <dbReference type="Rhea" id="RHEA-COMP:19723"/>
        <dbReference type="ChEBI" id="CHEBI:15378"/>
        <dbReference type="ChEBI" id="CHEBI:53604"/>
        <dbReference type="ChEBI" id="CHEBI:57812"/>
        <dbReference type="ChEBI" id="CHEBI:60377"/>
        <dbReference type="ChEBI" id="CHEBI:231972"/>
    </reaction>
    <physiologicalReaction direction="left-to-right" evidence="12">
        <dbReference type="Rhea" id="RHEA:81648"/>
    </physiologicalReaction>
</comment>
<comment type="catalytic activity">
    <reaction evidence="7">
        <text>a 3-O-[N-acetyl-alpha-D-galactosaminyl]-L-threonyl-[protein] + CMP-N-acetyl-beta-neuraminate = a 3-O-[N-acetyl-alpha-neuraminosyl-(2-&gt;6)-N-acetyl-alpha-D-galactosaminyl]-L-threonyl-[protein] + CMP + H(+)</text>
        <dbReference type="Rhea" id="RHEA:81643"/>
        <dbReference type="Rhea" id="RHEA-COMP:11689"/>
        <dbReference type="Rhea" id="RHEA-COMP:19720"/>
        <dbReference type="ChEBI" id="CHEBI:15378"/>
        <dbReference type="ChEBI" id="CHEBI:57812"/>
        <dbReference type="ChEBI" id="CHEBI:60377"/>
        <dbReference type="ChEBI" id="CHEBI:87075"/>
        <dbReference type="ChEBI" id="CHEBI:231970"/>
    </reaction>
    <physiologicalReaction direction="left-to-right" evidence="12">
        <dbReference type="Rhea" id="RHEA:81644"/>
    </physiologicalReaction>
</comment>
<comment type="catalytic activity">
    <reaction evidence="2">
        <text>a 3-O-[beta-D-galactosyl-(1-&gt;3)-N-acetyl-alpha-D-galactosaminyl]-L-seryl-[protein] + CMP-N-acetyl-beta-neuraminate = a 3-O-{beta-D-galactosyl-(1-&gt;3)-[N-acetyl-alpha-neuraminosyl-(2-&gt;6)]-N-acetyl-alpha-D-galactosaminyl}-L-seryl-[protein] + CMP + H(+)</text>
        <dbReference type="Rhea" id="RHEA:81655"/>
        <dbReference type="Rhea" id="RHEA-COMP:13922"/>
        <dbReference type="Rhea" id="RHEA-COMP:19724"/>
        <dbReference type="ChEBI" id="CHEBI:15378"/>
        <dbReference type="ChEBI" id="CHEBI:57812"/>
        <dbReference type="ChEBI" id="CHEBI:60377"/>
        <dbReference type="ChEBI" id="CHEBI:137949"/>
        <dbReference type="ChEBI" id="CHEBI:231973"/>
    </reaction>
    <physiologicalReaction direction="left-to-right" evidence="2">
        <dbReference type="Rhea" id="RHEA:81656"/>
    </physiologicalReaction>
</comment>
<comment type="catalytic activity">
    <reaction evidence="1">
        <text>a 3-O-[beta-D-galactosyl-(1-&gt;3)-N-acetyl-alpha-D-galactosaminyl]-L-threonyl-[protein] + CMP-N-acetyl-beta-neuraminate = a 3-O-{beta-D-galactosyl-(1-&gt;3)-[N-acetyl-alpha-neuraminosyl-(2-&gt;6)]-N-acetyl-alpha-D-galactosaminyl}-L-threonyl-[protein] + CMP + H(+)</text>
        <dbReference type="Rhea" id="RHEA:81651"/>
        <dbReference type="Rhea" id="RHEA-COMP:13923"/>
        <dbReference type="Rhea" id="RHEA-COMP:19722"/>
        <dbReference type="ChEBI" id="CHEBI:15378"/>
        <dbReference type="ChEBI" id="CHEBI:57812"/>
        <dbReference type="ChEBI" id="CHEBI:60377"/>
        <dbReference type="ChEBI" id="CHEBI:137950"/>
        <dbReference type="ChEBI" id="CHEBI:231971"/>
    </reaction>
    <physiologicalReaction direction="left-to-right" evidence="1">
        <dbReference type="Rhea" id="RHEA:81652"/>
    </physiologicalReaction>
</comment>
<comment type="catalytic activity">
    <reaction evidence="2">
        <text>a 3-O-[N-acetyl-alpha-neuraminyl-(2-&gt;3)-beta-D-galactosyl-(1-&gt;3)-N-acetyl-alpha-D-galactosaminyl]-L-threonyl-[protein] + CMP-N-acetyl-beta-neuraminate = a 3-O-{alpha-Neu5Ac-(2-&gt;3)-beta-D-Gal-(1-&gt;3)-[alpha-Neu5Ac-(2-&gt;6)]-alpha-D-GalNAc}-L-threonyl-[protein] + CMP + H(+)</text>
        <dbReference type="Rhea" id="RHEA:81659"/>
        <dbReference type="Rhea" id="RHEA-COMP:14417"/>
        <dbReference type="Rhea" id="RHEA-COMP:16763"/>
        <dbReference type="ChEBI" id="CHEBI:15378"/>
        <dbReference type="ChEBI" id="CHEBI:57812"/>
        <dbReference type="ChEBI" id="CHEBI:60377"/>
        <dbReference type="ChEBI" id="CHEBI:139598"/>
        <dbReference type="ChEBI" id="CHEBI:156398"/>
    </reaction>
    <physiologicalReaction direction="left-to-right" evidence="2">
        <dbReference type="Rhea" id="RHEA:81660"/>
    </physiologicalReaction>
</comment>
<comment type="pathway">
    <text evidence="11">Protein modification; protein glycosylation.</text>
</comment>
<comment type="subcellular location">
    <subcellularLocation>
        <location evidence="2">Golgi apparatus membrane</location>
        <topology evidence="2">Single-pass type II membrane protein</topology>
    </subcellularLocation>
</comment>
<comment type="tissue specificity">
    <text evidence="6">Submaxillary gland, mammary gland, spleen and colon.</text>
</comment>
<comment type="PTM">
    <text evidence="2">Glycosylated; autosialylated.</text>
</comment>
<comment type="similarity">
    <text evidence="10">Belongs to the glycosyltransferase 29 family.</text>
</comment>
<comment type="online information" name="Functional Glycomics Gateway - GTase">
    <link uri="http://www.functionalglycomics.org/glycomics/molecule/jsp/glycoEnzyme/viewGlycoEnzyme.jsp?gbpId=gt_mou_650"/>
    <text>ST6GalNAc I</text>
</comment>
<sequence>MTRYCRGLSQRQAFLLLTVLALLFILLFVVKDPRAKDSRCQFIWKNDASAQENQQKAEPQVPIMTLSPRVHNKETTSVSSKDLKKQEREAVQGEQAEGKEKRKLETIRPAPENPQSKAEPAAKTPVSEHLDKLPRAPGALSTRKTPMATGAVPAKKKVVQATKSPASSPHPTTRRRQRLKASEFKSEPRWDFEEEYSLDMSSLQTNCSASVKIKASKSPWLQNIFLPNITLFLDSGRFTQSEWNRLEHFAPPFGFMELNQSLVQKVVTRFPPVRQQQLLLASLPTGYSKCITCAVVGNGGILNDSRVGREIDSHDYVFRLSGAVIKGYEQDVGTRTSFYGFTAFSLTQSILILGRRGFQHVPLGKDVRYLHFLEGTRDYEWLEAMFLNQTLAKTHLSWFRHRPQEAFRNALDLDRYLLLHPDFLRYMKNRFLRSKTLDTAHWRIYRPTTGALLLLTALHLCDKVSAYGFITEGHQRFSDHYYDTSWKRLIFYINHDFRLERMVWKRLHDEGIIWLYQRPQSDKAKN</sequence>
<proteinExistence type="evidence at protein level"/>
<reference key="1">
    <citation type="journal article" date="2000" name="J. Biochem.">
        <title>Molecular cloning and genomic analysis of mouse GalNAc alpha-2,6-sialyltransferase (ST6GalNAc I).</title>
        <authorList>
            <person name="Kurosawa N."/>
            <person name="Takashima S."/>
            <person name="Kono M."/>
            <person name="Ikehara Y."/>
            <person name="Inoue M."/>
            <person name="Tachida Y."/>
            <person name="Narimatsu H."/>
            <person name="Tsuji S."/>
        </authorList>
    </citation>
    <scope>NUCLEOTIDE SEQUENCE [GENOMIC DNA / MRNA]</scope>
    <scope>FUNCTION</scope>
    <scope>CATALYTIC ACTIVITY</scope>
    <scope>TISSUE SPECIFICITY</scope>
    <source>
        <tissue>Submandibular gland</tissue>
    </source>
</reference>
<reference key="2">
    <citation type="journal article" date="2009" name="PLoS Biol.">
        <title>Lineage-specific biology revealed by a finished genome assembly of the mouse.</title>
        <authorList>
            <person name="Church D.M."/>
            <person name="Goodstadt L."/>
            <person name="Hillier L.W."/>
            <person name="Zody M.C."/>
            <person name="Goldstein S."/>
            <person name="She X."/>
            <person name="Bult C.J."/>
            <person name="Agarwala R."/>
            <person name="Cherry J.L."/>
            <person name="DiCuccio M."/>
            <person name="Hlavina W."/>
            <person name="Kapustin Y."/>
            <person name="Meric P."/>
            <person name="Maglott D."/>
            <person name="Birtle Z."/>
            <person name="Marques A.C."/>
            <person name="Graves T."/>
            <person name="Zhou S."/>
            <person name="Teague B."/>
            <person name="Potamousis K."/>
            <person name="Churas C."/>
            <person name="Place M."/>
            <person name="Herschleb J."/>
            <person name="Runnheim R."/>
            <person name="Forrest D."/>
            <person name="Amos-Landgraf J."/>
            <person name="Schwartz D.C."/>
            <person name="Cheng Z."/>
            <person name="Lindblad-Toh K."/>
            <person name="Eichler E.E."/>
            <person name="Ponting C.P."/>
        </authorList>
    </citation>
    <scope>NUCLEOTIDE SEQUENCE [LARGE SCALE GENOMIC DNA]</scope>
    <source>
        <strain>C57BL/6J</strain>
    </source>
</reference>
<reference key="3">
    <citation type="journal article" date="2004" name="Genome Res.">
        <title>The status, quality, and expansion of the NIH full-length cDNA project: the Mammalian Gene Collection (MGC).</title>
        <authorList>
            <consortium name="The MGC Project Team"/>
        </authorList>
    </citation>
    <scope>NUCLEOTIDE SEQUENCE [LARGE SCALE MRNA]</scope>
    <source>
        <tissue>Brain</tissue>
    </source>
</reference>
<reference key="4">
    <citation type="journal article" date="2006" name="Glycobiology">
        <title>Chemoenzymatically synthesized multimeric Tn/STn MUC1 glycopeptides elicit cancer-specific anti-MUC1 antibody responses and override tolerance.</title>
        <authorList>
            <person name="Soerensen A.L."/>
            <person name="Reis C.A."/>
            <person name="Tarp M.A."/>
            <person name="Mandel U."/>
            <person name="Ramachandran K."/>
            <person name="Sankaranarayanan V."/>
            <person name="Schwientek T."/>
            <person name="Graham R."/>
            <person name="Taylor-Papadimitriou J."/>
            <person name="Hollingsworth M.A."/>
            <person name="Burchell J."/>
            <person name="Clausen H."/>
        </authorList>
    </citation>
    <scope>FUNCTION</scope>
    <scope>CATALYTIC ACTIVITY</scope>
</reference>
<reference key="5">
    <citation type="journal article" date="2022" name="Cell">
        <title>Mucus sialylation determines intestinal host-commensal homeostasis.</title>
        <authorList>
            <person name="Yao Y."/>
            <person name="Kim G."/>
            <person name="Shafer S."/>
            <person name="Chen Z."/>
            <person name="Kubo S."/>
            <person name="Ji Y."/>
            <person name="Luo J."/>
            <person name="Yang W."/>
            <person name="Perner S.P."/>
            <person name="Kanellopoulou C."/>
            <person name="Park A.Y."/>
            <person name="Jiang P."/>
            <person name="Li J."/>
            <person name="Baris S."/>
            <person name="Aydiner E.K."/>
            <person name="Ertem D."/>
            <person name="Mulder D.J."/>
            <person name="Warner N."/>
            <person name="Griffiths A.M."/>
            <person name="Topf-Olivestone C."/>
            <person name="Kori M."/>
            <person name="Werner L."/>
            <person name="Ouahed J."/>
            <person name="Field M."/>
            <person name="Liu C."/>
            <person name="Schwarz B."/>
            <person name="Bosio C.M."/>
            <person name="Ganesan S."/>
            <person name="Song J."/>
            <person name="Urlaub H."/>
            <person name="Oellerich T."/>
            <person name="Malaker S.A."/>
            <person name="Zheng L."/>
            <person name="Bertozzi C.R."/>
            <person name="Zhang Y."/>
            <person name="Matthews H."/>
            <person name="Montgomery W."/>
            <person name="Shih H.Y."/>
            <person name="Jiang J."/>
            <person name="Jones M."/>
            <person name="Baras A."/>
            <person name="Shuldiner A."/>
            <person name="Gonzaga-Jauregui C."/>
            <person name="Snapper S.B."/>
            <person name="Muise A.M."/>
            <person name="Shouval D.S."/>
            <person name="Ozen A."/>
            <person name="Pan K.T."/>
            <person name="Wu C."/>
            <person name="Lenardo M.J."/>
        </authorList>
    </citation>
    <scope>FUNCTION</scope>
    <scope>MUTAGENESIS OF ARG-319</scope>
</reference>
<organism>
    <name type="scientific">Mus musculus</name>
    <name type="common">Mouse</name>
    <dbReference type="NCBI Taxonomy" id="10090"/>
    <lineage>
        <taxon>Eukaryota</taxon>
        <taxon>Metazoa</taxon>
        <taxon>Chordata</taxon>
        <taxon>Craniata</taxon>
        <taxon>Vertebrata</taxon>
        <taxon>Euteleostomi</taxon>
        <taxon>Mammalia</taxon>
        <taxon>Eutheria</taxon>
        <taxon>Euarchontoglires</taxon>
        <taxon>Glires</taxon>
        <taxon>Rodentia</taxon>
        <taxon>Myomorpha</taxon>
        <taxon>Muroidea</taxon>
        <taxon>Muridae</taxon>
        <taxon>Murinae</taxon>
        <taxon>Mus</taxon>
        <taxon>Mus</taxon>
    </lineage>
</organism>